<dbReference type="EC" id="2.5.1.72" evidence="1"/>
<dbReference type="EMBL" id="CP000099">
    <property type="protein sequence ID" value="AAZ70805.1"/>
    <property type="molecule type" value="Genomic_DNA"/>
</dbReference>
<dbReference type="SMR" id="Q46BD7"/>
<dbReference type="STRING" id="269797.Mbar_A1865"/>
<dbReference type="PaxDb" id="269797-Mbar_A1865"/>
<dbReference type="KEGG" id="mba:Mbar_A1865"/>
<dbReference type="eggNOG" id="arCOG04459">
    <property type="taxonomic scope" value="Archaea"/>
</dbReference>
<dbReference type="HOGENOM" id="CLU_047382_0_0_2"/>
<dbReference type="OrthoDB" id="5931at2157"/>
<dbReference type="UniPathway" id="UPA00253">
    <property type="reaction ID" value="UER00327"/>
</dbReference>
<dbReference type="GO" id="GO:0005737">
    <property type="term" value="C:cytoplasm"/>
    <property type="evidence" value="ECO:0007669"/>
    <property type="project" value="UniProtKB-SubCell"/>
</dbReference>
<dbReference type="GO" id="GO:0051539">
    <property type="term" value="F:4 iron, 4 sulfur cluster binding"/>
    <property type="evidence" value="ECO:0007669"/>
    <property type="project" value="UniProtKB-KW"/>
</dbReference>
<dbReference type="GO" id="GO:0046872">
    <property type="term" value="F:metal ion binding"/>
    <property type="evidence" value="ECO:0007669"/>
    <property type="project" value="UniProtKB-KW"/>
</dbReference>
<dbReference type="GO" id="GO:0008987">
    <property type="term" value="F:quinolinate synthetase A activity"/>
    <property type="evidence" value="ECO:0007669"/>
    <property type="project" value="UniProtKB-UniRule"/>
</dbReference>
<dbReference type="GO" id="GO:0034628">
    <property type="term" value="P:'de novo' NAD biosynthetic process from L-aspartate"/>
    <property type="evidence" value="ECO:0007669"/>
    <property type="project" value="TreeGrafter"/>
</dbReference>
<dbReference type="FunFam" id="3.40.50.10800:FF:000001">
    <property type="entry name" value="Quinolinate synthase A"/>
    <property type="match status" value="1"/>
</dbReference>
<dbReference type="FunFam" id="3.40.50.10800:FF:000003">
    <property type="entry name" value="Quinolinate synthase A"/>
    <property type="match status" value="1"/>
</dbReference>
<dbReference type="Gene3D" id="3.40.50.10800">
    <property type="entry name" value="NadA-like"/>
    <property type="match status" value="3"/>
</dbReference>
<dbReference type="HAMAP" id="MF_00568">
    <property type="entry name" value="NadA_type2"/>
    <property type="match status" value="1"/>
</dbReference>
<dbReference type="InterPro" id="IPR003473">
    <property type="entry name" value="NadA"/>
</dbReference>
<dbReference type="InterPro" id="IPR036094">
    <property type="entry name" value="NadA_sf"/>
</dbReference>
<dbReference type="InterPro" id="IPR023066">
    <property type="entry name" value="Quinolinate_synth_type2"/>
</dbReference>
<dbReference type="NCBIfam" id="TIGR00550">
    <property type="entry name" value="nadA"/>
    <property type="match status" value="1"/>
</dbReference>
<dbReference type="NCBIfam" id="NF006878">
    <property type="entry name" value="PRK09375.1-2"/>
    <property type="match status" value="1"/>
</dbReference>
<dbReference type="PANTHER" id="PTHR30573:SF0">
    <property type="entry name" value="QUINOLINATE SYNTHASE, CHLOROPLASTIC"/>
    <property type="match status" value="1"/>
</dbReference>
<dbReference type="PANTHER" id="PTHR30573">
    <property type="entry name" value="QUINOLINATE SYNTHETASE A"/>
    <property type="match status" value="1"/>
</dbReference>
<dbReference type="Pfam" id="PF02445">
    <property type="entry name" value="NadA"/>
    <property type="match status" value="1"/>
</dbReference>
<dbReference type="SUPFAM" id="SSF142754">
    <property type="entry name" value="NadA-like"/>
    <property type="match status" value="1"/>
</dbReference>
<reference key="1">
    <citation type="journal article" date="2006" name="J. Bacteriol.">
        <title>The Methanosarcina barkeri genome: comparative analysis with Methanosarcina acetivorans and Methanosarcina mazei reveals extensive rearrangement within methanosarcinal genomes.</title>
        <authorList>
            <person name="Maeder D.L."/>
            <person name="Anderson I."/>
            <person name="Brettin T.S."/>
            <person name="Bruce D.C."/>
            <person name="Gilna P."/>
            <person name="Han C.S."/>
            <person name="Lapidus A."/>
            <person name="Metcalf W.W."/>
            <person name="Saunders E."/>
            <person name="Tapia R."/>
            <person name="Sowers K.R."/>
        </authorList>
    </citation>
    <scope>NUCLEOTIDE SEQUENCE [LARGE SCALE GENOMIC DNA]</scope>
    <source>
        <strain>Fusaro / DSM 804</strain>
    </source>
</reference>
<accession>Q46BD7</accession>
<protein>
    <recommendedName>
        <fullName evidence="1">Quinolinate synthase</fullName>
        <ecNumber evidence="1">2.5.1.72</ecNumber>
    </recommendedName>
</protein>
<sequence>MQQAELIERIKELKIKRNAVILAHYYSRPEVQDIADFVGDSLGLSQEAVRQTADVIVFCGVHFMGESAAILCPDKTVLLPEIDATCPMADMVDIEGLRREKEKHPNAVVVCYVNSSAAIKAESYICCTSANAVEVVNSLEAEKVIFVPDKNLAAYVESRTDKKIIPWEGHCPTHHQILREDVLKMKEKHPEAKFIAHPECRPEVLELADHIASTRGMIMYAKNSPAKEFIIGTECGLLHGLHKAAPEKKYYCVSEFACCPSMKMVNLEKVLVSLEKVQHVVTVPYNVRTRAKEALDRMLAVKIR</sequence>
<gene>
    <name evidence="1" type="primary">nadA</name>
    <name type="ordered locus">Mbar_A1865</name>
</gene>
<evidence type="ECO:0000255" key="1">
    <source>
        <dbReference type="HAMAP-Rule" id="MF_00568"/>
    </source>
</evidence>
<comment type="function">
    <text evidence="1">Catalyzes the condensation of iminoaspartate with dihydroxyacetone phosphate to form quinolinate.</text>
</comment>
<comment type="catalytic activity">
    <reaction evidence="1">
        <text>iminosuccinate + dihydroxyacetone phosphate = quinolinate + phosphate + 2 H2O + H(+)</text>
        <dbReference type="Rhea" id="RHEA:25888"/>
        <dbReference type="ChEBI" id="CHEBI:15377"/>
        <dbReference type="ChEBI" id="CHEBI:15378"/>
        <dbReference type="ChEBI" id="CHEBI:29959"/>
        <dbReference type="ChEBI" id="CHEBI:43474"/>
        <dbReference type="ChEBI" id="CHEBI:57642"/>
        <dbReference type="ChEBI" id="CHEBI:77875"/>
        <dbReference type="EC" id="2.5.1.72"/>
    </reaction>
    <physiologicalReaction direction="left-to-right" evidence="1">
        <dbReference type="Rhea" id="RHEA:25889"/>
    </physiologicalReaction>
</comment>
<comment type="cofactor">
    <cofactor evidence="1">
        <name>[4Fe-4S] cluster</name>
        <dbReference type="ChEBI" id="CHEBI:49883"/>
    </cofactor>
    <text evidence="1">Binds 1 [4Fe-4S] cluster per subunit.</text>
</comment>
<comment type="pathway">
    <text evidence="1">Cofactor biosynthesis; NAD(+) biosynthesis; quinolinate from iminoaspartate: step 1/1.</text>
</comment>
<comment type="subcellular location">
    <subcellularLocation>
        <location evidence="1">Cytoplasm</location>
    </subcellularLocation>
</comment>
<comment type="similarity">
    <text evidence="1">Belongs to the quinolinate synthase family. Type 2 subfamily.</text>
</comment>
<feature type="chain" id="PRO_1000061157" description="Quinolinate synthase">
    <location>
        <begin position="1"/>
        <end position="304"/>
    </location>
</feature>
<feature type="binding site" evidence="1">
    <location>
        <position position="24"/>
    </location>
    <ligand>
        <name>iminosuccinate</name>
        <dbReference type="ChEBI" id="CHEBI:77875"/>
    </ligand>
</feature>
<feature type="binding site" evidence="1">
    <location>
        <position position="41"/>
    </location>
    <ligand>
        <name>iminosuccinate</name>
        <dbReference type="ChEBI" id="CHEBI:77875"/>
    </ligand>
</feature>
<feature type="binding site" evidence="1">
    <location>
        <position position="86"/>
    </location>
    <ligand>
        <name>[4Fe-4S] cluster</name>
        <dbReference type="ChEBI" id="CHEBI:49883"/>
    </ligand>
</feature>
<feature type="binding site" evidence="1">
    <location>
        <begin position="112"/>
        <end position="114"/>
    </location>
    <ligand>
        <name>iminosuccinate</name>
        <dbReference type="ChEBI" id="CHEBI:77875"/>
    </ligand>
</feature>
<feature type="binding site" evidence="1">
    <location>
        <position position="129"/>
    </location>
    <ligand>
        <name>iminosuccinate</name>
        <dbReference type="ChEBI" id="CHEBI:77875"/>
    </ligand>
</feature>
<feature type="binding site" evidence="1">
    <location>
        <position position="171"/>
    </location>
    <ligand>
        <name>[4Fe-4S] cluster</name>
        <dbReference type="ChEBI" id="CHEBI:49883"/>
    </ligand>
</feature>
<feature type="binding site" evidence="1">
    <location>
        <begin position="197"/>
        <end position="199"/>
    </location>
    <ligand>
        <name>iminosuccinate</name>
        <dbReference type="ChEBI" id="CHEBI:77875"/>
    </ligand>
</feature>
<feature type="binding site" evidence="1">
    <location>
        <position position="214"/>
    </location>
    <ligand>
        <name>iminosuccinate</name>
        <dbReference type="ChEBI" id="CHEBI:77875"/>
    </ligand>
</feature>
<feature type="binding site" evidence="1">
    <location>
        <position position="259"/>
    </location>
    <ligand>
        <name>[4Fe-4S] cluster</name>
        <dbReference type="ChEBI" id="CHEBI:49883"/>
    </ligand>
</feature>
<organism>
    <name type="scientific">Methanosarcina barkeri (strain Fusaro / DSM 804)</name>
    <dbReference type="NCBI Taxonomy" id="269797"/>
    <lineage>
        <taxon>Archaea</taxon>
        <taxon>Methanobacteriati</taxon>
        <taxon>Methanobacteriota</taxon>
        <taxon>Stenosarchaea group</taxon>
        <taxon>Methanomicrobia</taxon>
        <taxon>Methanosarcinales</taxon>
        <taxon>Methanosarcinaceae</taxon>
        <taxon>Methanosarcina</taxon>
    </lineage>
</organism>
<keyword id="KW-0004">4Fe-4S</keyword>
<keyword id="KW-0963">Cytoplasm</keyword>
<keyword id="KW-0408">Iron</keyword>
<keyword id="KW-0411">Iron-sulfur</keyword>
<keyword id="KW-0479">Metal-binding</keyword>
<keyword id="KW-0662">Pyridine nucleotide biosynthesis</keyword>
<keyword id="KW-0808">Transferase</keyword>
<name>NADA_METBF</name>
<proteinExistence type="inferred from homology"/>